<sequence length="284" mass="30882">MSRPDQAARRRAIAAELHVSPTFDARDEAERRIGFVADYLRTAGLRACVLGISGGIDSSTAGRLAQLAVERLRASGYDARFVAMRLPYGAQHDEADARRALAFVRADETLTVDVKPAADAMLAALAAGGLAYLDHAQQDFVLGNIKARERMIAQYAVAGARNGVVIGTDHAAESVMGFFTKFGDGGADVLPLAGLTKRRVRALARMLGADEPLVLKTPTADLETLRPQRPDEHAYGITYEQIDDFLEGKPMDDAVAETVLRFYDATRHKRALPYTMFDWPGHPA</sequence>
<name>NADE_BURP0</name>
<proteinExistence type="inferred from homology"/>
<dbReference type="EC" id="6.3.1.5" evidence="1"/>
<dbReference type="EMBL" id="CP000573">
    <property type="protein sequence ID" value="ABN94039.1"/>
    <property type="molecule type" value="Genomic_DNA"/>
</dbReference>
<dbReference type="RefSeq" id="WP_004525360.1">
    <property type="nucleotide sequence ID" value="NC_009078.1"/>
</dbReference>
<dbReference type="SMR" id="A3P6S9"/>
<dbReference type="GeneID" id="93063658"/>
<dbReference type="KEGG" id="bpl:BURPS1106A_A2006"/>
<dbReference type="HOGENOM" id="CLU_059327_3_0_4"/>
<dbReference type="UniPathway" id="UPA00253">
    <property type="reaction ID" value="UER00333"/>
</dbReference>
<dbReference type="Proteomes" id="UP000006738">
    <property type="component" value="Chromosome II"/>
</dbReference>
<dbReference type="GO" id="GO:0005737">
    <property type="term" value="C:cytoplasm"/>
    <property type="evidence" value="ECO:0007669"/>
    <property type="project" value="InterPro"/>
</dbReference>
<dbReference type="GO" id="GO:0005524">
    <property type="term" value="F:ATP binding"/>
    <property type="evidence" value="ECO:0007669"/>
    <property type="project" value="UniProtKB-UniRule"/>
</dbReference>
<dbReference type="GO" id="GO:0004359">
    <property type="term" value="F:glutaminase activity"/>
    <property type="evidence" value="ECO:0007669"/>
    <property type="project" value="InterPro"/>
</dbReference>
<dbReference type="GO" id="GO:0046872">
    <property type="term" value="F:metal ion binding"/>
    <property type="evidence" value="ECO:0007669"/>
    <property type="project" value="UniProtKB-KW"/>
</dbReference>
<dbReference type="GO" id="GO:0003952">
    <property type="term" value="F:NAD+ synthase (glutamine-hydrolyzing) activity"/>
    <property type="evidence" value="ECO:0007669"/>
    <property type="project" value="InterPro"/>
</dbReference>
<dbReference type="GO" id="GO:0008795">
    <property type="term" value="F:NAD+ synthase activity"/>
    <property type="evidence" value="ECO:0007669"/>
    <property type="project" value="UniProtKB-UniRule"/>
</dbReference>
<dbReference type="GO" id="GO:0009435">
    <property type="term" value="P:NAD biosynthetic process"/>
    <property type="evidence" value="ECO:0007669"/>
    <property type="project" value="UniProtKB-UniRule"/>
</dbReference>
<dbReference type="CDD" id="cd00553">
    <property type="entry name" value="NAD_synthase"/>
    <property type="match status" value="1"/>
</dbReference>
<dbReference type="Gene3D" id="3.40.50.620">
    <property type="entry name" value="HUPs"/>
    <property type="match status" value="1"/>
</dbReference>
<dbReference type="HAMAP" id="MF_00193">
    <property type="entry name" value="NadE_ammonia_dep"/>
    <property type="match status" value="1"/>
</dbReference>
<dbReference type="InterPro" id="IPR022310">
    <property type="entry name" value="NAD/GMP_synthase"/>
</dbReference>
<dbReference type="InterPro" id="IPR003694">
    <property type="entry name" value="NAD_synthase"/>
</dbReference>
<dbReference type="InterPro" id="IPR022926">
    <property type="entry name" value="NH(3)-dep_NAD(+)_synth"/>
</dbReference>
<dbReference type="InterPro" id="IPR014729">
    <property type="entry name" value="Rossmann-like_a/b/a_fold"/>
</dbReference>
<dbReference type="NCBIfam" id="TIGR00552">
    <property type="entry name" value="nadE"/>
    <property type="match status" value="1"/>
</dbReference>
<dbReference type="NCBIfam" id="NF001979">
    <property type="entry name" value="PRK00768.1"/>
    <property type="match status" value="1"/>
</dbReference>
<dbReference type="PANTHER" id="PTHR23090">
    <property type="entry name" value="NH 3 /GLUTAMINE-DEPENDENT NAD + SYNTHETASE"/>
    <property type="match status" value="1"/>
</dbReference>
<dbReference type="PANTHER" id="PTHR23090:SF7">
    <property type="entry name" value="NH(3)-DEPENDENT NAD(+) SYNTHETASE"/>
    <property type="match status" value="1"/>
</dbReference>
<dbReference type="Pfam" id="PF02540">
    <property type="entry name" value="NAD_synthase"/>
    <property type="match status" value="1"/>
</dbReference>
<dbReference type="SUPFAM" id="SSF52402">
    <property type="entry name" value="Adenine nucleotide alpha hydrolases-like"/>
    <property type="match status" value="1"/>
</dbReference>
<keyword id="KW-0067">ATP-binding</keyword>
<keyword id="KW-0436">Ligase</keyword>
<keyword id="KW-0460">Magnesium</keyword>
<keyword id="KW-0479">Metal-binding</keyword>
<keyword id="KW-0520">NAD</keyword>
<keyword id="KW-0547">Nucleotide-binding</keyword>
<accession>A3P6S9</accession>
<reference key="1">
    <citation type="journal article" date="2010" name="Genome Biol. Evol.">
        <title>Continuing evolution of Burkholderia mallei through genome reduction and large-scale rearrangements.</title>
        <authorList>
            <person name="Losada L."/>
            <person name="Ronning C.M."/>
            <person name="DeShazer D."/>
            <person name="Woods D."/>
            <person name="Fedorova N."/>
            <person name="Kim H.S."/>
            <person name="Shabalina S.A."/>
            <person name="Pearson T.R."/>
            <person name="Brinkac L."/>
            <person name="Tan P."/>
            <person name="Nandi T."/>
            <person name="Crabtree J."/>
            <person name="Badger J."/>
            <person name="Beckstrom-Sternberg S."/>
            <person name="Saqib M."/>
            <person name="Schutzer S.E."/>
            <person name="Keim P."/>
            <person name="Nierman W.C."/>
        </authorList>
    </citation>
    <scope>NUCLEOTIDE SEQUENCE [LARGE SCALE GENOMIC DNA]</scope>
    <source>
        <strain>1106a</strain>
    </source>
</reference>
<protein>
    <recommendedName>
        <fullName evidence="1">NH(3)-dependent NAD(+) synthetase</fullName>
        <ecNumber evidence="1">6.3.1.5</ecNumber>
    </recommendedName>
</protein>
<evidence type="ECO:0000255" key="1">
    <source>
        <dbReference type="HAMAP-Rule" id="MF_00193"/>
    </source>
</evidence>
<feature type="chain" id="PRO_1000099010" description="NH(3)-dependent NAD(+) synthetase">
    <location>
        <begin position="1"/>
        <end position="284"/>
    </location>
</feature>
<feature type="binding site" evidence="1">
    <location>
        <begin position="51"/>
        <end position="58"/>
    </location>
    <ligand>
        <name>ATP</name>
        <dbReference type="ChEBI" id="CHEBI:30616"/>
    </ligand>
</feature>
<feature type="binding site" evidence="1">
    <location>
        <position position="57"/>
    </location>
    <ligand>
        <name>Mg(2+)</name>
        <dbReference type="ChEBI" id="CHEBI:18420"/>
    </ligand>
</feature>
<feature type="binding site" evidence="1">
    <location>
        <position position="148"/>
    </location>
    <ligand>
        <name>deamido-NAD(+)</name>
        <dbReference type="ChEBI" id="CHEBI:58437"/>
    </ligand>
</feature>
<feature type="binding site" evidence="1">
    <location>
        <position position="168"/>
    </location>
    <ligand>
        <name>ATP</name>
        <dbReference type="ChEBI" id="CHEBI:30616"/>
    </ligand>
</feature>
<feature type="binding site" evidence="1">
    <location>
        <position position="173"/>
    </location>
    <ligand>
        <name>Mg(2+)</name>
        <dbReference type="ChEBI" id="CHEBI:18420"/>
    </ligand>
</feature>
<feature type="binding site" evidence="1">
    <location>
        <position position="181"/>
    </location>
    <ligand>
        <name>deamido-NAD(+)</name>
        <dbReference type="ChEBI" id="CHEBI:58437"/>
    </ligand>
</feature>
<feature type="binding site" evidence="1">
    <location>
        <position position="188"/>
    </location>
    <ligand>
        <name>deamido-NAD(+)</name>
        <dbReference type="ChEBI" id="CHEBI:58437"/>
    </ligand>
</feature>
<feature type="binding site" evidence="1">
    <location>
        <position position="197"/>
    </location>
    <ligand>
        <name>ATP</name>
        <dbReference type="ChEBI" id="CHEBI:30616"/>
    </ligand>
</feature>
<feature type="binding site" evidence="1">
    <location>
        <position position="219"/>
    </location>
    <ligand>
        <name>ATP</name>
        <dbReference type="ChEBI" id="CHEBI:30616"/>
    </ligand>
</feature>
<feature type="binding site" evidence="1">
    <location>
        <begin position="268"/>
        <end position="269"/>
    </location>
    <ligand>
        <name>deamido-NAD(+)</name>
        <dbReference type="ChEBI" id="CHEBI:58437"/>
    </ligand>
</feature>
<comment type="function">
    <text evidence="1">Catalyzes the ATP-dependent amidation of deamido-NAD to form NAD. Uses ammonia as a nitrogen source.</text>
</comment>
<comment type="catalytic activity">
    <reaction evidence="1">
        <text>deamido-NAD(+) + NH4(+) + ATP = AMP + diphosphate + NAD(+) + H(+)</text>
        <dbReference type="Rhea" id="RHEA:21188"/>
        <dbReference type="ChEBI" id="CHEBI:15378"/>
        <dbReference type="ChEBI" id="CHEBI:28938"/>
        <dbReference type="ChEBI" id="CHEBI:30616"/>
        <dbReference type="ChEBI" id="CHEBI:33019"/>
        <dbReference type="ChEBI" id="CHEBI:57540"/>
        <dbReference type="ChEBI" id="CHEBI:58437"/>
        <dbReference type="ChEBI" id="CHEBI:456215"/>
        <dbReference type="EC" id="6.3.1.5"/>
    </reaction>
</comment>
<comment type="pathway">
    <text evidence="1">Cofactor biosynthesis; NAD(+) biosynthesis; NAD(+) from deamido-NAD(+) (ammonia route): step 1/1.</text>
</comment>
<comment type="subunit">
    <text evidence="1">Homodimer.</text>
</comment>
<comment type="similarity">
    <text evidence="1">Belongs to the NAD synthetase family.</text>
</comment>
<organism>
    <name type="scientific">Burkholderia pseudomallei (strain 1106a)</name>
    <dbReference type="NCBI Taxonomy" id="357348"/>
    <lineage>
        <taxon>Bacteria</taxon>
        <taxon>Pseudomonadati</taxon>
        <taxon>Pseudomonadota</taxon>
        <taxon>Betaproteobacteria</taxon>
        <taxon>Burkholderiales</taxon>
        <taxon>Burkholderiaceae</taxon>
        <taxon>Burkholderia</taxon>
        <taxon>pseudomallei group</taxon>
    </lineage>
</organism>
<gene>
    <name evidence="1" type="primary">nadE</name>
    <name type="ordered locus">BURPS1106A_A2006</name>
</gene>